<accession>B5R4S3</accession>
<protein>
    <recommendedName>
        <fullName evidence="1">Sigma factor-binding protein Crl</fullName>
    </recommendedName>
</protein>
<feature type="chain" id="PRO_1000138145" description="Sigma factor-binding protein Crl">
    <location>
        <begin position="1"/>
        <end position="133"/>
    </location>
</feature>
<feature type="region of interest" description="Essential for activity" evidence="1">
    <location>
        <begin position="99"/>
        <end position="122"/>
    </location>
</feature>
<feature type="coiled-coil region" evidence="1">
    <location>
        <begin position="90"/>
        <end position="111"/>
    </location>
</feature>
<proteinExistence type="inferred from homology"/>
<organism>
    <name type="scientific">Salmonella enteritidis PT4 (strain P125109)</name>
    <dbReference type="NCBI Taxonomy" id="550537"/>
    <lineage>
        <taxon>Bacteria</taxon>
        <taxon>Pseudomonadati</taxon>
        <taxon>Pseudomonadota</taxon>
        <taxon>Gammaproteobacteria</taxon>
        <taxon>Enterobacterales</taxon>
        <taxon>Enterobacteriaceae</taxon>
        <taxon>Salmonella</taxon>
    </lineage>
</organism>
<comment type="function">
    <text evidence="1">Binds to the sigma-S subunit of RNA polymerase, activating expression of sigma-S-regulated genes. Stimulates RNA polymerase holoenzyme formation and may bind to several other sigma factors, such as sigma-70 and sigma-32.</text>
</comment>
<comment type="subcellular location">
    <subcellularLocation>
        <location evidence="1">Cytoplasm</location>
    </subcellularLocation>
</comment>
<comment type="similarity">
    <text evidence="1">Belongs to the Crl family.</text>
</comment>
<name>CRL_SALEP</name>
<reference key="1">
    <citation type="journal article" date="2008" name="Genome Res.">
        <title>Comparative genome analysis of Salmonella enteritidis PT4 and Salmonella gallinarum 287/91 provides insights into evolutionary and host adaptation pathways.</title>
        <authorList>
            <person name="Thomson N.R."/>
            <person name="Clayton D.J."/>
            <person name="Windhorst D."/>
            <person name="Vernikos G."/>
            <person name="Davidson S."/>
            <person name="Churcher C."/>
            <person name="Quail M.A."/>
            <person name="Stevens M."/>
            <person name="Jones M.A."/>
            <person name="Watson M."/>
            <person name="Barron A."/>
            <person name="Layton A."/>
            <person name="Pickard D."/>
            <person name="Kingsley R.A."/>
            <person name="Bignell A."/>
            <person name="Clark L."/>
            <person name="Harris B."/>
            <person name="Ormond D."/>
            <person name="Abdellah Z."/>
            <person name="Brooks K."/>
            <person name="Cherevach I."/>
            <person name="Chillingworth T."/>
            <person name="Woodward J."/>
            <person name="Norberczak H."/>
            <person name="Lord A."/>
            <person name="Arrowsmith C."/>
            <person name="Jagels K."/>
            <person name="Moule S."/>
            <person name="Mungall K."/>
            <person name="Saunders M."/>
            <person name="Whitehead S."/>
            <person name="Chabalgoity J.A."/>
            <person name="Maskell D."/>
            <person name="Humphreys T."/>
            <person name="Roberts M."/>
            <person name="Barrow P.A."/>
            <person name="Dougan G."/>
            <person name="Parkhill J."/>
        </authorList>
    </citation>
    <scope>NUCLEOTIDE SEQUENCE [LARGE SCALE GENOMIC DNA]</scope>
    <source>
        <strain>P125109</strain>
    </source>
</reference>
<evidence type="ECO:0000255" key="1">
    <source>
        <dbReference type="HAMAP-Rule" id="MF_01178"/>
    </source>
</evidence>
<sequence length="133" mass="15769">MTLPSGHPKSRLIKKFTALGPYIREGQCEDNRFFFDCLAVCVNVKPAPEKREFWGWWMELEAQEKRFTYRYQFGLFDKEGNWTAVPINETEVVERLEYTLREFHEKLRDLLISMELALEPSDDFNDEPVKLSA</sequence>
<dbReference type="EMBL" id="AM933172">
    <property type="protein sequence ID" value="CAR31889.1"/>
    <property type="molecule type" value="Genomic_DNA"/>
</dbReference>
<dbReference type="RefSeq" id="WP_000174693.1">
    <property type="nucleotide sequence ID" value="NC_011294.1"/>
</dbReference>
<dbReference type="SMR" id="B5R4S3"/>
<dbReference type="KEGG" id="set:SEN0302"/>
<dbReference type="HOGENOM" id="CLU_136773_0_0_6"/>
<dbReference type="Proteomes" id="UP000000613">
    <property type="component" value="Chromosome"/>
</dbReference>
<dbReference type="GO" id="GO:0005737">
    <property type="term" value="C:cytoplasm"/>
    <property type="evidence" value="ECO:0007669"/>
    <property type="project" value="UniProtKB-SubCell"/>
</dbReference>
<dbReference type="GO" id="GO:0045893">
    <property type="term" value="P:positive regulation of DNA-templated transcription"/>
    <property type="evidence" value="ECO:0007669"/>
    <property type="project" value="UniProtKB-UniRule"/>
</dbReference>
<dbReference type="Gene3D" id="3.30.310.230">
    <property type="entry name" value="Sigma factor-binding protein Crl monomer"/>
    <property type="match status" value="1"/>
</dbReference>
<dbReference type="HAMAP" id="MF_01178">
    <property type="entry name" value="Crl"/>
    <property type="match status" value="1"/>
</dbReference>
<dbReference type="InterPro" id="IPR009986">
    <property type="entry name" value="Tscrpt_reg_Crl"/>
</dbReference>
<dbReference type="InterPro" id="IPR038208">
    <property type="entry name" value="Tscrpt_reg_Crl_sf"/>
</dbReference>
<dbReference type="NCBIfam" id="NF008217">
    <property type="entry name" value="PRK10984.1"/>
    <property type="match status" value="1"/>
</dbReference>
<dbReference type="Pfam" id="PF07417">
    <property type="entry name" value="Crl"/>
    <property type="match status" value="1"/>
</dbReference>
<gene>
    <name evidence="1" type="primary">crl</name>
    <name type="ordered locus">SEN0302</name>
</gene>
<keyword id="KW-0010">Activator</keyword>
<keyword id="KW-0175">Coiled coil</keyword>
<keyword id="KW-0963">Cytoplasm</keyword>
<keyword id="KW-0804">Transcription</keyword>
<keyword id="KW-0805">Transcription regulation</keyword>